<sequence length="368" mass="42123">MTDNVLKLSRKNIKKLIPYQSARRIGGEHGNILLNANESPVSIFFKLKKKPFNRYPECQPSKLISSYAHYVNLSCNQILATRGADEGIELLIKAFCEPGKDAIIYCPPTYDMYRINATIAGVEIKEIPTIKNTWQLDLLNIKLNLSRVKLIYICNPNNPTGNIFFKKDLIFLLNITLGQALVVIDEAYIEFSPEESMTNYLKDYPNLVVLRTLSKAFALAGIRCGFTLAKKEIIQTLSKVISPYPISIPVSDIAIRSLEKDYVQLMKNRVLDSNNNRIWLINQLKNITCVETVFESNANYVLVKFSMFEKVFETLWNKGIILRNQNEKTNLKKCIRISMGTRSESLRLIKELKIFSKKNMCQGEMSEK</sequence>
<reference key="1">
    <citation type="journal article" date="2000" name="Nature">
        <title>Genome sequence of the endocellular bacterial symbiont of aphids Buchnera sp. APS.</title>
        <authorList>
            <person name="Shigenobu S."/>
            <person name="Watanabe H."/>
            <person name="Hattori M."/>
            <person name="Sakaki Y."/>
            <person name="Ishikawa H."/>
        </authorList>
    </citation>
    <scope>NUCLEOTIDE SEQUENCE [LARGE SCALE GENOMIC DNA]</scope>
    <source>
        <strain>APS</strain>
    </source>
</reference>
<name>HIS8_BUCAI</name>
<evidence type="ECO:0000250" key="1"/>
<evidence type="ECO:0000305" key="2"/>
<feature type="chain" id="PRO_0000153329" description="Histidinol-phosphate aminotransferase">
    <location>
        <begin position="1"/>
        <end position="368"/>
    </location>
</feature>
<feature type="modified residue" description="N6-(pyridoxal phosphate)lysine" evidence="1">
    <location>
        <position position="215"/>
    </location>
</feature>
<accession>P57202</accession>
<comment type="catalytic activity">
    <reaction>
        <text>L-histidinol phosphate + 2-oxoglutarate = 3-(imidazol-4-yl)-2-oxopropyl phosphate + L-glutamate</text>
        <dbReference type="Rhea" id="RHEA:23744"/>
        <dbReference type="ChEBI" id="CHEBI:16810"/>
        <dbReference type="ChEBI" id="CHEBI:29985"/>
        <dbReference type="ChEBI" id="CHEBI:57766"/>
        <dbReference type="ChEBI" id="CHEBI:57980"/>
        <dbReference type="EC" id="2.6.1.9"/>
    </reaction>
</comment>
<comment type="cofactor">
    <cofactor evidence="1">
        <name>pyridoxal 5'-phosphate</name>
        <dbReference type="ChEBI" id="CHEBI:597326"/>
    </cofactor>
</comment>
<comment type="pathway">
    <text>Amino-acid biosynthesis; L-histidine biosynthesis; L-histidine from 5-phospho-alpha-D-ribose 1-diphosphate: step 7/9.</text>
</comment>
<comment type="subunit">
    <text evidence="1">Homodimer.</text>
</comment>
<comment type="similarity">
    <text evidence="2">Belongs to the class-II pyridoxal-phosphate-dependent aminotransferase family. Histidinol-phosphate aminotransferase subfamily.</text>
</comment>
<organism>
    <name type="scientific">Buchnera aphidicola subsp. Acyrthosiphon pisum (strain APS)</name>
    <name type="common">Acyrthosiphon pisum symbiotic bacterium</name>
    <dbReference type="NCBI Taxonomy" id="107806"/>
    <lineage>
        <taxon>Bacteria</taxon>
        <taxon>Pseudomonadati</taxon>
        <taxon>Pseudomonadota</taxon>
        <taxon>Gammaproteobacteria</taxon>
        <taxon>Enterobacterales</taxon>
        <taxon>Erwiniaceae</taxon>
        <taxon>Buchnera</taxon>
    </lineage>
</organism>
<gene>
    <name type="primary">hisC</name>
    <name type="ordered locus">BU101</name>
</gene>
<proteinExistence type="inferred from homology"/>
<protein>
    <recommendedName>
        <fullName>Histidinol-phosphate aminotransferase</fullName>
        <ecNumber>2.6.1.9</ecNumber>
    </recommendedName>
    <alternativeName>
        <fullName>Imidazole acetol-phosphate transaminase</fullName>
    </alternativeName>
</protein>
<keyword id="KW-0028">Amino-acid biosynthesis</keyword>
<keyword id="KW-0032">Aminotransferase</keyword>
<keyword id="KW-0368">Histidine biosynthesis</keyword>
<keyword id="KW-0663">Pyridoxal phosphate</keyword>
<keyword id="KW-1185">Reference proteome</keyword>
<keyword id="KW-0808">Transferase</keyword>
<dbReference type="EC" id="2.6.1.9"/>
<dbReference type="EMBL" id="BA000003">
    <property type="protein sequence ID" value="BAB12820.1"/>
    <property type="molecule type" value="Genomic_DNA"/>
</dbReference>
<dbReference type="RefSeq" id="NP_239934.1">
    <property type="nucleotide sequence ID" value="NC_002528.1"/>
</dbReference>
<dbReference type="RefSeq" id="WP_010895944.1">
    <property type="nucleotide sequence ID" value="NC_002528.1"/>
</dbReference>
<dbReference type="SMR" id="P57202"/>
<dbReference type="STRING" id="563178.BUAP5A_099"/>
<dbReference type="EnsemblBacteria" id="BAB12820">
    <property type="protein sequence ID" value="BAB12820"/>
    <property type="gene ID" value="BAB12820"/>
</dbReference>
<dbReference type="KEGG" id="buc:BU101"/>
<dbReference type="PATRIC" id="fig|107806.10.peg.109"/>
<dbReference type="eggNOG" id="COG0079">
    <property type="taxonomic scope" value="Bacteria"/>
</dbReference>
<dbReference type="HOGENOM" id="CLU_017584_3_1_6"/>
<dbReference type="UniPathway" id="UPA00031">
    <property type="reaction ID" value="UER00012"/>
</dbReference>
<dbReference type="Proteomes" id="UP000001806">
    <property type="component" value="Chromosome"/>
</dbReference>
<dbReference type="GO" id="GO:0004400">
    <property type="term" value="F:histidinol-phosphate transaminase activity"/>
    <property type="evidence" value="ECO:0007669"/>
    <property type="project" value="UniProtKB-UniRule"/>
</dbReference>
<dbReference type="GO" id="GO:0030170">
    <property type="term" value="F:pyridoxal phosphate binding"/>
    <property type="evidence" value="ECO:0007669"/>
    <property type="project" value="InterPro"/>
</dbReference>
<dbReference type="GO" id="GO:0000105">
    <property type="term" value="P:L-histidine biosynthetic process"/>
    <property type="evidence" value="ECO:0007669"/>
    <property type="project" value="UniProtKB-UniRule"/>
</dbReference>
<dbReference type="CDD" id="cd00609">
    <property type="entry name" value="AAT_like"/>
    <property type="match status" value="1"/>
</dbReference>
<dbReference type="Gene3D" id="3.90.1150.10">
    <property type="entry name" value="Aspartate Aminotransferase, domain 1"/>
    <property type="match status" value="1"/>
</dbReference>
<dbReference type="Gene3D" id="3.40.640.10">
    <property type="entry name" value="Type I PLP-dependent aspartate aminotransferase-like (Major domain)"/>
    <property type="match status" value="1"/>
</dbReference>
<dbReference type="HAMAP" id="MF_01023">
    <property type="entry name" value="HisC_aminotrans_2"/>
    <property type="match status" value="1"/>
</dbReference>
<dbReference type="InterPro" id="IPR001917">
    <property type="entry name" value="Aminotrans_II_pyridoxalP_BS"/>
</dbReference>
<dbReference type="InterPro" id="IPR004839">
    <property type="entry name" value="Aminotransferase_I/II_large"/>
</dbReference>
<dbReference type="InterPro" id="IPR005861">
    <property type="entry name" value="HisP_aminotrans"/>
</dbReference>
<dbReference type="InterPro" id="IPR015424">
    <property type="entry name" value="PyrdxlP-dep_Trfase"/>
</dbReference>
<dbReference type="InterPro" id="IPR015421">
    <property type="entry name" value="PyrdxlP-dep_Trfase_major"/>
</dbReference>
<dbReference type="InterPro" id="IPR015422">
    <property type="entry name" value="PyrdxlP-dep_Trfase_small"/>
</dbReference>
<dbReference type="NCBIfam" id="TIGR01141">
    <property type="entry name" value="hisC"/>
    <property type="match status" value="1"/>
</dbReference>
<dbReference type="PANTHER" id="PTHR42885:SF2">
    <property type="entry name" value="HISTIDINOL-PHOSPHATE AMINOTRANSFERASE"/>
    <property type="match status" value="1"/>
</dbReference>
<dbReference type="PANTHER" id="PTHR42885">
    <property type="entry name" value="HISTIDINOL-PHOSPHATE AMINOTRANSFERASE-RELATED"/>
    <property type="match status" value="1"/>
</dbReference>
<dbReference type="Pfam" id="PF00155">
    <property type="entry name" value="Aminotran_1_2"/>
    <property type="match status" value="1"/>
</dbReference>
<dbReference type="SUPFAM" id="SSF53383">
    <property type="entry name" value="PLP-dependent transferases"/>
    <property type="match status" value="1"/>
</dbReference>
<dbReference type="PROSITE" id="PS00599">
    <property type="entry name" value="AA_TRANSFER_CLASS_2"/>
    <property type="match status" value="1"/>
</dbReference>